<dbReference type="EMBL" id="AB126218">
    <property type="protein sequence ID" value="BAD72062.1"/>
    <property type="molecule type" value="mRNA"/>
</dbReference>
<dbReference type="EMBL" id="AK002413">
    <property type="protein sequence ID" value="BAB22081.1"/>
    <property type="molecule type" value="mRNA"/>
</dbReference>
<dbReference type="EMBL" id="AK004329">
    <property type="protein sequence ID" value="BAB23264.1"/>
    <property type="molecule type" value="mRNA"/>
</dbReference>
<dbReference type="EMBL" id="AK009304">
    <property type="protein sequence ID" value="BAB26205.1"/>
    <property type="molecule type" value="mRNA"/>
</dbReference>
<dbReference type="EMBL" id="AK020403">
    <property type="protein sequence ID" value="BAB32092.1"/>
    <property type="molecule type" value="mRNA"/>
</dbReference>
<dbReference type="EMBL" id="AK155319">
    <property type="protein sequence ID" value="BAE33187.1"/>
    <property type="molecule type" value="mRNA"/>
</dbReference>
<dbReference type="EMBL" id="BC048464">
    <property type="protein sequence ID" value="AAH48464.1"/>
    <property type="molecule type" value="mRNA"/>
</dbReference>
<dbReference type="CCDS" id="CCDS15618.1"/>
<dbReference type="RefSeq" id="NP_079700.1">
    <property type="nucleotide sequence ID" value="NM_025424.3"/>
</dbReference>
<dbReference type="SMR" id="Q9CQ45"/>
<dbReference type="FunCoup" id="Q9CQ45">
    <property type="interactions" value="384"/>
</dbReference>
<dbReference type="STRING" id="10090.ENSMUSP00000046311"/>
<dbReference type="PhosphoSitePlus" id="Q9CQ45"/>
<dbReference type="jPOST" id="Q9CQ45"/>
<dbReference type="PaxDb" id="10090-ENSMUSP00000046311"/>
<dbReference type="PeptideAtlas" id="Q9CQ45"/>
<dbReference type="ProteomicsDB" id="252808"/>
<dbReference type="Pumba" id="Q9CQ45"/>
<dbReference type="Antibodypedia" id="20714">
    <property type="antibodies" value="154 antibodies from 31 providers"/>
</dbReference>
<dbReference type="Ensembl" id="ENSMUST00000046770.10">
    <property type="protein sequence ID" value="ENSMUSP00000046311.10"/>
    <property type="gene ID" value="ENSMUSG00000037499.10"/>
</dbReference>
<dbReference type="GeneID" id="66208"/>
<dbReference type="KEGG" id="mmu:66208"/>
<dbReference type="UCSC" id="uc007ecg.1">
    <property type="organism name" value="mouse"/>
</dbReference>
<dbReference type="AGR" id="MGI:1913458"/>
<dbReference type="CTD" id="29937"/>
<dbReference type="MGI" id="MGI:1913458">
    <property type="gene designation" value="Nenf"/>
</dbReference>
<dbReference type="VEuPathDB" id="HostDB:ENSMUSG00000037499"/>
<dbReference type="eggNOG" id="KOG1110">
    <property type="taxonomic scope" value="Eukaryota"/>
</dbReference>
<dbReference type="GeneTree" id="ENSGT00940000162504"/>
<dbReference type="HOGENOM" id="CLU_134788_0_0_1"/>
<dbReference type="InParanoid" id="Q9CQ45"/>
<dbReference type="OMA" id="VGYTAQR"/>
<dbReference type="OrthoDB" id="547796at2759"/>
<dbReference type="PhylomeDB" id="Q9CQ45"/>
<dbReference type="TreeFam" id="TF332131"/>
<dbReference type="BioGRID-ORCS" id="66208">
    <property type="hits" value="2 hits in 76 CRISPR screens"/>
</dbReference>
<dbReference type="ChiTaRS" id="Nenf">
    <property type="organism name" value="mouse"/>
</dbReference>
<dbReference type="PRO" id="PR:Q9CQ45"/>
<dbReference type="Proteomes" id="UP000000589">
    <property type="component" value="Chromosome 1"/>
</dbReference>
<dbReference type="RNAct" id="Q9CQ45">
    <property type="molecule type" value="protein"/>
</dbReference>
<dbReference type="Bgee" id="ENSMUSG00000037499">
    <property type="expression patterns" value="Expressed in interventricular septum and 246 other cell types or tissues"/>
</dbReference>
<dbReference type="GO" id="GO:0005783">
    <property type="term" value="C:endoplasmic reticulum"/>
    <property type="evidence" value="ECO:0000314"/>
    <property type="project" value="UniProtKB"/>
</dbReference>
<dbReference type="GO" id="GO:0005615">
    <property type="term" value="C:extracellular space"/>
    <property type="evidence" value="ECO:0000314"/>
    <property type="project" value="MGI"/>
</dbReference>
<dbReference type="GO" id="GO:0005739">
    <property type="term" value="C:mitochondrion"/>
    <property type="evidence" value="ECO:0000314"/>
    <property type="project" value="UniProtKB"/>
</dbReference>
<dbReference type="GO" id="GO:0008083">
    <property type="term" value="F:growth factor activity"/>
    <property type="evidence" value="ECO:0000314"/>
    <property type="project" value="MGI"/>
</dbReference>
<dbReference type="GO" id="GO:0046872">
    <property type="term" value="F:metal ion binding"/>
    <property type="evidence" value="ECO:0007669"/>
    <property type="project" value="UniProtKB-KW"/>
</dbReference>
<dbReference type="GO" id="GO:0000165">
    <property type="term" value="P:MAPK cascade"/>
    <property type="evidence" value="ECO:0000314"/>
    <property type="project" value="MGI"/>
</dbReference>
<dbReference type="GO" id="GO:0032099">
    <property type="term" value="P:negative regulation of appetite"/>
    <property type="evidence" value="ECO:0000314"/>
    <property type="project" value="UniProtKB"/>
</dbReference>
<dbReference type="GO" id="GO:0043410">
    <property type="term" value="P:positive regulation of MAPK cascade"/>
    <property type="evidence" value="ECO:0000314"/>
    <property type="project" value="MGI"/>
</dbReference>
<dbReference type="FunFam" id="3.10.120.10:FF:000013">
    <property type="entry name" value="Neudesin"/>
    <property type="match status" value="1"/>
</dbReference>
<dbReference type="Gene3D" id="3.10.120.10">
    <property type="entry name" value="Cytochrome b5-like heme/steroid binding domain"/>
    <property type="match status" value="1"/>
</dbReference>
<dbReference type="InterPro" id="IPR001199">
    <property type="entry name" value="Cyt_B5-like_heme/steroid-bd"/>
</dbReference>
<dbReference type="InterPro" id="IPR036400">
    <property type="entry name" value="Cyt_B5-like_heme/steroid_sf"/>
</dbReference>
<dbReference type="InterPro" id="IPR050577">
    <property type="entry name" value="MAPR/NEUFC/NENF-like"/>
</dbReference>
<dbReference type="PANTHER" id="PTHR10281">
    <property type="entry name" value="MEMBRANE-ASSOCIATED PROGESTERONE RECEPTOR COMPONENT-RELATED"/>
    <property type="match status" value="1"/>
</dbReference>
<dbReference type="PANTHER" id="PTHR10281:SF72">
    <property type="entry name" value="NEUDESIN"/>
    <property type="match status" value="1"/>
</dbReference>
<dbReference type="Pfam" id="PF00173">
    <property type="entry name" value="Cyt-b5"/>
    <property type="match status" value="1"/>
</dbReference>
<dbReference type="SMART" id="SM01117">
    <property type="entry name" value="Cyt-b5"/>
    <property type="match status" value="1"/>
</dbReference>
<dbReference type="SUPFAM" id="SSF55856">
    <property type="entry name" value="Cytochrome b5-like heme/steroid binding domain"/>
    <property type="match status" value="1"/>
</dbReference>
<proteinExistence type="evidence at protein level"/>
<sequence>MARPAPWWRLRLLAALVLALALVPVPSAWAGQTPRPAERGPPVRLFTEEELARYGGEEEDQPIYLAVKGVVFDVTSGKEFYGRGAPYNALAGKDSSRGVAKMSLDPADLTHDTTGLTAKELEALDDVFSKVYKAKYPIVGYTARRILNEDGSPNLDFKPEDQPHFDIKDEF</sequence>
<accession>Q9CQ45</accession>
<accession>Q5TM91</accession>
<evidence type="ECO:0000250" key="1">
    <source>
        <dbReference type="UniProtKB" id="Q9UMX5"/>
    </source>
</evidence>
<evidence type="ECO:0000255" key="2"/>
<evidence type="ECO:0000269" key="3">
    <source>
    </source>
</evidence>
<evidence type="ECO:0000269" key="4">
    <source>
    </source>
</evidence>
<evidence type="ECO:0000269" key="5">
    <source>
    </source>
</evidence>
<evidence type="ECO:0000269" key="6">
    <source>
    </source>
</evidence>
<evidence type="ECO:0000269" key="7">
    <source>
    </source>
</evidence>
<evidence type="ECO:0000305" key="8"/>
<evidence type="ECO:0000312" key="9">
    <source>
        <dbReference type="MGI" id="MGI:1913458"/>
    </source>
</evidence>
<gene>
    <name evidence="9" type="primary">Nenf</name>
    <name type="synonym">Spuf</name>
</gene>
<protein>
    <recommendedName>
        <fullName>Neudesin</fullName>
    </recommendedName>
    <alternativeName>
        <fullName>Neuron-derived neurotrophic factor</fullName>
    </alternativeName>
    <alternativeName>
        <fullName>Secreted protein of unknown function</fullName>
        <shortName>SPUF protein</shortName>
    </alternativeName>
</protein>
<name>NENF_MOUSE</name>
<comment type="function">
    <text evidence="3 4 5 6 7">Acts as a neurotrophic factor in postnatal mature neurons, enhancing neuronal survival (PubMed:15605373, PubMed:31536960). Promotes cell proliferation and neurogenesis in undifferentiated neural pro-genitor cells at the embryonic stage and inhibits differentiation of astrocytes (PubMed:16547973). Its neurotrophic activity is exerted via MAPK1/ERK2, MAPK3/ERK1 and AKT1/AKT pathways (PubMed:15605373, PubMed:16547973). Neurotrophic activity is enhanced by binding to heme (PubMed:18056703). Also acts as an anorexigenic neurotrophic factor that contributes to energy balance (PubMed:23576617).</text>
</comment>
<comment type="subunit">
    <text evidence="7">Interacts with PINK1 and PARK7.</text>
</comment>
<comment type="subcellular location">
    <subcellularLocation>
        <location evidence="3">Secreted</location>
        <location evidence="3">Extracellular space</location>
    </subcellularLocation>
    <subcellularLocation>
        <location evidence="7">Mitochondrion</location>
    </subcellularLocation>
    <subcellularLocation>
        <location evidence="7">Endoplasmic reticulum</location>
    </subcellularLocation>
    <text evidence="1">Localized to mitochondria and endoplasmic reticulum by PINK1 and PARK7.</text>
</comment>
<comment type="tissue specificity">
    <text evidence="3 6">In the embryo, expressed most abundantly in brain and spinal cord. Widely expressed in adult tissues including brain, heart, lung and kidney. In brain, expressed in neurons but not in glial cells (PubMed:15605373). In the hypothalamus is expressed primarily in the paraventricular nucleus (PVN), with lower levels of expression in the arcuate nucleus (ARC) (PubMed:23576617).</text>
</comment>
<comment type="developmental stage">
    <text evidence="4">In embryonic cerebral cortex is first weakly detected at 12.5 dpc, and thereafter gradually increased. At 13.5 dpc expression is observed mostly in the preplate.</text>
</comment>
<comment type="domain">
    <text>The cytochrome b5 heme-binding domain was proven to bind heme, although it lacks the conserved iron-binding His residue at position 81.</text>
</comment>
<comment type="miscellaneous">
    <text evidence="1">Non-classical progesterone receptors involved in extranuclear signaling are classified in 2 groups: the class II progestin and adipoQ receptor (PAQR) family (also called mPRs) (PAQR5, PAQR6, PAQR7, PAQR8 and PAQR9) and the b5-like heme/steroid-binding protein family (also called MAPRs) (PGRMC1, PGRMC2, NENF and CYB5D2).</text>
</comment>
<comment type="similarity">
    <text evidence="8">Belongs to the cytochrome b5 family. MAPR subfamily.</text>
</comment>
<feature type="signal peptide" evidence="2">
    <location>
        <begin position="1"/>
        <end position="30"/>
    </location>
</feature>
<feature type="chain" id="PRO_0000018599" description="Neudesin">
    <location>
        <begin position="31"/>
        <end position="171"/>
    </location>
</feature>
<feature type="domain" description="Cytochrome b5 heme-binding">
    <location>
        <begin position="43"/>
        <end position="128"/>
    </location>
</feature>
<feature type="modified residue" description="N6-acetyllysine" evidence="1">
    <location>
        <position position="135"/>
    </location>
</feature>
<feature type="mutagenesis site" description="Does not bind heme." evidence="5">
    <location>
        <begin position="73"/>
        <end position="125"/>
    </location>
</feature>
<organism>
    <name type="scientific">Mus musculus</name>
    <name type="common">Mouse</name>
    <dbReference type="NCBI Taxonomy" id="10090"/>
    <lineage>
        <taxon>Eukaryota</taxon>
        <taxon>Metazoa</taxon>
        <taxon>Chordata</taxon>
        <taxon>Craniata</taxon>
        <taxon>Vertebrata</taxon>
        <taxon>Euteleostomi</taxon>
        <taxon>Mammalia</taxon>
        <taxon>Eutheria</taxon>
        <taxon>Euarchontoglires</taxon>
        <taxon>Glires</taxon>
        <taxon>Rodentia</taxon>
        <taxon>Myomorpha</taxon>
        <taxon>Muroidea</taxon>
        <taxon>Muridae</taxon>
        <taxon>Murinae</taxon>
        <taxon>Mus</taxon>
        <taxon>Mus</taxon>
    </lineage>
</organism>
<keyword id="KW-0007">Acetylation</keyword>
<keyword id="KW-0256">Endoplasmic reticulum</keyword>
<keyword id="KW-0349">Heme</keyword>
<keyword id="KW-0408">Iron</keyword>
<keyword id="KW-0479">Metal-binding</keyword>
<keyword id="KW-0496">Mitochondrion</keyword>
<keyword id="KW-1185">Reference proteome</keyword>
<keyword id="KW-0964">Secreted</keyword>
<keyword id="KW-0732">Signal</keyword>
<reference key="1">
    <citation type="journal article" date="2005" name="J. Neurosci. Res.">
        <title>Neudesin, a novel secreted protein with a unique primary structure and neurotrophic activity.</title>
        <authorList>
            <person name="Kimura I."/>
            <person name="Yoshioka M."/>
            <person name="Konishi M."/>
            <person name="Miyake A."/>
            <person name="Itoh N."/>
        </authorList>
    </citation>
    <scope>NUCLEOTIDE SEQUENCE [MRNA]</scope>
    <scope>FUNCTION</scope>
    <scope>SUBCELLULAR LOCATION</scope>
    <scope>TISSUE SPECIFICITY</scope>
    <source>
        <tissue>Embryo</tissue>
    </source>
</reference>
<reference key="2">
    <citation type="journal article" date="2005" name="Science">
        <title>The transcriptional landscape of the mammalian genome.</title>
        <authorList>
            <person name="Carninci P."/>
            <person name="Kasukawa T."/>
            <person name="Katayama S."/>
            <person name="Gough J."/>
            <person name="Frith M.C."/>
            <person name="Maeda N."/>
            <person name="Oyama R."/>
            <person name="Ravasi T."/>
            <person name="Lenhard B."/>
            <person name="Wells C."/>
            <person name="Kodzius R."/>
            <person name="Shimokawa K."/>
            <person name="Bajic V.B."/>
            <person name="Brenner S.E."/>
            <person name="Batalov S."/>
            <person name="Forrest A.R."/>
            <person name="Zavolan M."/>
            <person name="Davis M.J."/>
            <person name="Wilming L.G."/>
            <person name="Aidinis V."/>
            <person name="Allen J.E."/>
            <person name="Ambesi-Impiombato A."/>
            <person name="Apweiler R."/>
            <person name="Aturaliya R.N."/>
            <person name="Bailey T.L."/>
            <person name="Bansal M."/>
            <person name="Baxter L."/>
            <person name="Beisel K.W."/>
            <person name="Bersano T."/>
            <person name="Bono H."/>
            <person name="Chalk A.M."/>
            <person name="Chiu K.P."/>
            <person name="Choudhary V."/>
            <person name="Christoffels A."/>
            <person name="Clutterbuck D.R."/>
            <person name="Crowe M.L."/>
            <person name="Dalla E."/>
            <person name="Dalrymple B.P."/>
            <person name="de Bono B."/>
            <person name="Della Gatta G."/>
            <person name="di Bernardo D."/>
            <person name="Down T."/>
            <person name="Engstrom P."/>
            <person name="Fagiolini M."/>
            <person name="Faulkner G."/>
            <person name="Fletcher C.F."/>
            <person name="Fukushima T."/>
            <person name="Furuno M."/>
            <person name="Futaki S."/>
            <person name="Gariboldi M."/>
            <person name="Georgii-Hemming P."/>
            <person name="Gingeras T.R."/>
            <person name="Gojobori T."/>
            <person name="Green R.E."/>
            <person name="Gustincich S."/>
            <person name="Harbers M."/>
            <person name="Hayashi Y."/>
            <person name="Hensch T.K."/>
            <person name="Hirokawa N."/>
            <person name="Hill D."/>
            <person name="Huminiecki L."/>
            <person name="Iacono M."/>
            <person name="Ikeo K."/>
            <person name="Iwama A."/>
            <person name="Ishikawa T."/>
            <person name="Jakt M."/>
            <person name="Kanapin A."/>
            <person name="Katoh M."/>
            <person name="Kawasawa Y."/>
            <person name="Kelso J."/>
            <person name="Kitamura H."/>
            <person name="Kitano H."/>
            <person name="Kollias G."/>
            <person name="Krishnan S.P."/>
            <person name="Kruger A."/>
            <person name="Kummerfeld S.K."/>
            <person name="Kurochkin I.V."/>
            <person name="Lareau L.F."/>
            <person name="Lazarevic D."/>
            <person name="Lipovich L."/>
            <person name="Liu J."/>
            <person name="Liuni S."/>
            <person name="McWilliam S."/>
            <person name="Madan Babu M."/>
            <person name="Madera M."/>
            <person name="Marchionni L."/>
            <person name="Matsuda H."/>
            <person name="Matsuzawa S."/>
            <person name="Miki H."/>
            <person name="Mignone F."/>
            <person name="Miyake S."/>
            <person name="Morris K."/>
            <person name="Mottagui-Tabar S."/>
            <person name="Mulder N."/>
            <person name="Nakano N."/>
            <person name="Nakauchi H."/>
            <person name="Ng P."/>
            <person name="Nilsson R."/>
            <person name="Nishiguchi S."/>
            <person name="Nishikawa S."/>
            <person name="Nori F."/>
            <person name="Ohara O."/>
            <person name="Okazaki Y."/>
            <person name="Orlando V."/>
            <person name="Pang K.C."/>
            <person name="Pavan W.J."/>
            <person name="Pavesi G."/>
            <person name="Pesole G."/>
            <person name="Petrovsky N."/>
            <person name="Piazza S."/>
            <person name="Reed J."/>
            <person name="Reid J.F."/>
            <person name="Ring B.Z."/>
            <person name="Ringwald M."/>
            <person name="Rost B."/>
            <person name="Ruan Y."/>
            <person name="Salzberg S.L."/>
            <person name="Sandelin A."/>
            <person name="Schneider C."/>
            <person name="Schoenbach C."/>
            <person name="Sekiguchi K."/>
            <person name="Semple C.A."/>
            <person name="Seno S."/>
            <person name="Sessa L."/>
            <person name="Sheng Y."/>
            <person name="Shibata Y."/>
            <person name="Shimada H."/>
            <person name="Shimada K."/>
            <person name="Silva D."/>
            <person name="Sinclair B."/>
            <person name="Sperling S."/>
            <person name="Stupka E."/>
            <person name="Sugiura K."/>
            <person name="Sultana R."/>
            <person name="Takenaka Y."/>
            <person name="Taki K."/>
            <person name="Tammoja K."/>
            <person name="Tan S.L."/>
            <person name="Tang S."/>
            <person name="Taylor M.S."/>
            <person name="Tegner J."/>
            <person name="Teichmann S.A."/>
            <person name="Ueda H.R."/>
            <person name="van Nimwegen E."/>
            <person name="Verardo R."/>
            <person name="Wei C.L."/>
            <person name="Yagi K."/>
            <person name="Yamanishi H."/>
            <person name="Zabarovsky E."/>
            <person name="Zhu S."/>
            <person name="Zimmer A."/>
            <person name="Hide W."/>
            <person name="Bult C."/>
            <person name="Grimmond S.M."/>
            <person name="Teasdale R.D."/>
            <person name="Liu E.T."/>
            <person name="Brusic V."/>
            <person name="Quackenbush J."/>
            <person name="Wahlestedt C."/>
            <person name="Mattick J.S."/>
            <person name="Hume D.A."/>
            <person name="Kai C."/>
            <person name="Sasaki D."/>
            <person name="Tomaru Y."/>
            <person name="Fukuda S."/>
            <person name="Kanamori-Katayama M."/>
            <person name="Suzuki M."/>
            <person name="Aoki J."/>
            <person name="Arakawa T."/>
            <person name="Iida J."/>
            <person name="Imamura K."/>
            <person name="Itoh M."/>
            <person name="Kato T."/>
            <person name="Kawaji H."/>
            <person name="Kawagashira N."/>
            <person name="Kawashima T."/>
            <person name="Kojima M."/>
            <person name="Kondo S."/>
            <person name="Konno H."/>
            <person name="Nakano K."/>
            <person name="Ninomiya N."/>
            <person name="Nishio T."/>
            <person name="Okada M."/>
            <person name="Plessy C."/>
            <person name="Shibata K."/>
            <person name="Shiraki T."/>
            <person name="Suzuki S."/>
            <person name="Tagami M."/>
            <person name="Waki K."/>
            <person name="Watahiki A."/>
            <person name="Okamura-Oho Y."/>
            <person name="Suzuki H."/>
            <person name="Kawai J."/>
            <person name="Hayashizaki Y."/>
        </authorList>
    </citation>
    <scope>NUCLEOTIDE SEQUENCE [LARGE SCALE MRNA]</scope>
    <source>
        <strain>C57BL/6J</strain>
        <strain>NOD</strain>
        <tissue>Dendritic cell</tissue>
        <tissue>Embryo</tissue>
        <tissue>Kidney</tissue>
        <tissue>Tongue</tissue>
    </source>
</reference>
<reference key="3">
    <citation type="journal article" date="2004" name="Genome Res.">
        <title>The status, quality, and expansion of the NIH full-length cDNA project: the Mammalian Gene Collection (MGC).</title>
        <authorList>
            <consortium name="The MGC Project Team"/>
        </authorList>
    </citation>
    <scope>NUCLEOTIDE SEQUENCE [LARGE SCALE MRNA]</scope>
    <source>
        <tissue>Brain</tissue>
    </source>
</reference>
<reference key="4">
    <citation type="journal article" date="2006" name="J. Neurosci. Res.">
        <title>Neudesin, a secreted factor, promotes neural cell proliferation and neuronal differentiation in mouse neural precursor cells.</title>
        <authorList>
            <person name="Kimura I."/>
            <person name="Konishi M."/>
            <person name="Miyake A."/>
            <person name="Fujimoto M."/>
            <person name="Itoh N."/>
        </authorList>
    </citation>
    <scope>FUNCTION</scope>
    <scope>DEVELOPMENTAL STAGE</scope>
</reference>
<reference key="5">
    <citation type="journal article" date="2008" name="J. Biol. Chem.">
        <title>Neurotrophic activity of neudesin, a novel extracellular heme-binding protein, is dependent on the binding of heme to its cytochrome b5-like heme/steroid-binding domain.</title>
        <authorList>
            <person name="Kimura I."/>
            <person name="Nakayama Y."/>
            <person name="Yamauchi H."/>
            <person name="Konishi M."/>
            <person name="Miyake A."/>
            <person name="Mori M."/>
            <person name="Ohta M."/>
            <person name="Itoh N."/>
            <person name="Fujimoto M."/>
        </authorList>
    </citation>
    <scope>FUNCTION</scope>
    <scope>HEME-BINDING</scope>
    <scope>MUTAGENESIS OF 73-ASP--ASP-125</scope>
</reference>
<reference key="6">
    <citation type="journal article" date="2010" name="Cell">
        <title>A tissue-specific atlas of mouse protein phosphorylation and expression.</title>
        <authorList>
            <person name="Huttlin E.L."/>
            <person name="Jedrychowski M.P."/>
            <person name="Elias J.E."/>
            <person name="Goswami T."/>
            <person name="Rad R."/>
            <person name="Beausoleil S.A."/>
            <person name="Villen J."/>
            <person name="Haas W."/>
            <person name="Sowa M.E."/>
            <person name="Gygi S.P."/>
        </authorList>
    </citation>
    <scope>IDENTIFICATION BY MASS SPECTROMETRY [LARGE SCALE ANALYSIS]</scope>
    <source>
        <tissue>Brain</tissue>
        <tissue>Testis</tissue>
    </source>
</reference>
<reference key="7">
    <citation type="journal article" date="2013" name="Am. J. Physiol.">
        <title>Identification of hypothalamic neuron-derived neurotrophic factor as a novel factor modulating appetite.</title>
        <authorList>
            <person name="Byerly M.S."/>
            <person name="Swanson R.D."/>
            <person name="Semsarzadeh N.N."/>
            <person name="McCulloh P.S."/>
            <person name="Kwon K."/>
            <person name="Aja S."/>
            <person name="Moran T.H."/>
            <person name="Wong G.W."/>
            <person name="Blackshaw S."/>
        </authorList>
    </citation>
    <scope>FUNCTION</scope>
    <scope>TISSUE SPECIFICITY</scope>
</reference>
<reference key="8">
    <citation type="journal article" date="2019" name="IScience">
        <title>Rewiring of the Human Mitochondrial Interactome during Neuronal Reprogramming Reveals Regulators of the Respirasome and Neurogenesis.</title>
        <authorList>
            <person name="Moutaoufik M.T."/>
            <person name="Malty R."/>
            <person name="Amin S."/>
            <person name="Zhang Q."/>
            <person name="Phanse S."/>
            <person name="Gagarinova A."/>
            <person name="Zilocchi M."/>
            <person name="Hoell L."/>
            <person name="Minic Z."/>
            <person name="Gagarinova M."/>
            <person name="Aoki H."/>
            <person name="Stockwell J."/>
            <person name="Jessulat M."/>
            <person name="Goebels F."/>
            <person name="Broderick K."/>
            <person name="Scott N.E."/>
            <person name="Vlasblom J."/>
            <person name="Musso G."/>
            <person name="Prasad B."/>
            <person name="Lamantea E."/>
            <person name="Garavaglia B."/>
            <person name="Rajput A."/>
            <person name="Murayama K."/>
            <person name="Okazaki Y."/>
            <person name="Foster L.J."/>
            <person name="Bader G.D."/>
            <person name="Cayabyab F.S."/>
            <person name="Babu M."/>
        </authorList>
    </citation>
    <scope>FUNCTION</scope>
    <scope>INTERACTION WITH PINK1 AND PARK7</scope>
    <scope>SUBCELLULAR LOCATION</scope>
</reference>